<protein>
    <recommendedName>
        <fullName>Alkyl hydroperoxide reductase subunit F</fullName>
        <ecNumber>1.8.1.-</ecNumber>
    </recommendedName>
</protein>
<proteinExistence type="inferred from homology"/>
<reference key="1">
    <citation type="journal article" date="2002" name="Lancet">
        <title>Genome and virulence determinants of high virulence community-acquired MRSA.</title>
        <authorList>
            <person name="Baba T."/>
            <person name="Takeuchi F."/>
            <person name="Kuroda M."/>
            <person name="Yuzawa H."/>
            <person name="Aoki K."/>
            <person name="Oguchi A."/>
            <person name="Nagai Y."/>
            <person name="Iwama N."/>
            <person name="Asano K."/>
            <person name="Naimi T."/>
            <person name="Kuroda H."/>
            <person name="Cui L."/>
            <person name="Yamamoto K."/>
            <person name="Hiramatsu K."/>
        </authorList>
    </citation>
    <scope>NUCLEOTIDE SEQUENCE [LARGE SCALE GENOMIC DNA]</scope>
    <source>
        <strain>MW2</strain>
    </source>
</reference>
<evidence type="ECO:0000250" key="1"/>
<evidence type="ECO:0000305" key="2"/>
<name>AHPF_STAAW</name>
<dbReference type="EC" id="1.8.1.-"/>
<dbReference type="EMBL" id="BA000033">
    <property type="protein sequence ID" value="BAB94221.1"/>
    <property type="molecule type" value="Genomic_DNA"/>
</dbReference>
<dbReference type="RefSeq" id="WP_000930514.1">
    <property type="nucleotide sequence ID" value="NC_003923.1"/>
</dbReference>
<dbReference type="SMR" id="P66013"/>
<dbReference type="KEGG" id="sam:MW0356"/>
<dbReference type="HOGENOM" id="CLU_031864_4_2_9"/>
<dbReference type="GO" id="GO:0050660">
    <property type="term" value="F:flavin adenine dinucleotide binding"/>
    <property type="evidence" value="ECO:0007669"/>
    <property type="project" value="InterPro"/>
</dbReference>
<dbReference type="GO" id="GO:0051287">
    <property type="term" value="F:NAD binding"/>
    <property type="evidence" value="ECO:0007669"/>
    <property type="project" value="InterPro"/>
</dbReference>
<dbReference type="GO" id="GO:0102039">
    <property type="term" value="F:NADH-dependent peroxiredoxin activity"/>
    <property type="evidence" value="ECO:0007669"/>
    <property type="project" value="InterPro"/>
</dbReference>
<dbReference type="GO" id="GO:0016668">
    <property type="term" value="F:oxidoreductase activity, acting on a sulfur group of donors, NAD(P) as acceptor"/>
    <property type="evidence" value="ECO:0007669"/>
    <property type="project" value="UniProtKB-ARBA"/>
</dbReference>
<dbReference type="GO" id="GO:0000302">
    <property type="term" value="P:response to reactive oxygen species"/>
    <property type="evidence" value="ECO:0007669"/>
    <property type="project" value="InterPro"/>
</dbReference>
<dbReference type="CDD" id="cd03026">
    <property type="entry name" value="AhpF_NTD_C"/>
    <property type="match status" value="1"/>
</dbReference>
<dbReference type="CDD" id="cd02974">
    <property type="entry name" value="AhpF_NTD_N"/>
    <property type="match status" value="1"/>
</dbReference>
<dbReference type="FunFam" id="3.50.50.60:FF:000007">
    <property type="entry name" value="Alkyl hydroperoxide reductase, F subunit"/>
    <property type="match status" value="1"/>
</dbReference>
<dbReference type="Gene3D" id="3.40.30.80">
    <property type="match status" value="1"/>
</dbReference>
<dbReference type="Gene3D" id="3.50.50.60">
    <property type="entry name" value="FAD/NAD(P)-binding domain"/>
    <property type="match status" value="2"/>
</dbReference>
<dbReference type="InterPro" id="IPR044141">
    <property type="entry name" value="AhpF_NTD_C"/>
</dbReference>
<dbReference type="InterPro" id="IPR044142">
    <property type="entry name" value="AhpF_NTD_N"/>
</dbReference>
<dbReference type="InterPro" id="IPR012081">
    <property type="entry name" value="Alkyl_hydroperoxide_Rdtase_suF"/>
</dbReference>
<dbReference type="InterPro" id="IPR036188">
    <property type="entry name" value="FAD/NAD-bd_sf"/>
</dbReference>
<dbReference type="InterPro" id="IPR023753">
    <property type="entry name" value="FAD/NAD-binding_dom"/>
</dbReference>
<dbReference type="InterPro" id="IPR050097">
    <property type="entry name" value="Ferredoxin-NADP_redctase_2"/>
</dbReference>
<dbReference type="InterPro" id="IPR008255">
    <property type="entry name" value="Pyr_nucl-diS_OxRdtase_2_AS"/>
</dbReference>
<dbReference type="InterPro" id="IPR012336">
    <property type="entry name" value="Thioredoxin-like_fold"/>
</dbReference>
<dbReference type="InterPro" id="IPR036249">
    <property type="entry name" value="Thioredoxin-like_sf"/>
</dbReference>
<dbReference type="NCBIfam" id="TIGR03140">
    <property type="entry name" value="AhpF"/>
    <property type="match status" value="1"/>
</dbReference>
<dbReference type="PANTHER" id="PTHR48105">
    <property type="entry name" value="THIOREDOXIN REDUCTASE 1-RELATED-RELATED"/>
    <property type="match status" value="1"/>
</dbReference>
<dbReference type="Pfam" id="PF07992">
    <property type="entry name" value="Pyr_redox_2"/>
    <property type="match status" value="1"/>
</dbReference>
<dbReference type="Pfam" id="PF13192">
    <property type="entry name" value="Thioredoxin_3"/>
    <property type="match status" value="1"/>
</dbReference>
<dbReference type="PIRSF" id="PIRSF000238">
    <property type="entry name" value="AhpF"/>
    <property type="match status" value="1"/>
</dbReference>
<dbReference type="PRINTS" id="PR00368">
    <property type="entry name" value="FADPNR"/>
</dbReference>
<dbReference type="PRINTS" id="PR00469">
    <property type="entry name" value="PNDRDTASEII"/>
</dbReference>
<dbReference type="SUPFAM" id="SSF51905">
    <property type="entry name" value="FAD/NAD(P)-binding domain"/>
    <property type="match status" value="1"/>
</dbReference>
<dbReference type="SUPFAM" id="SSF52833">
    <property type="entry name" value="Thioredoxin-like"/>
    <property type="match status" value="2"/>
</dbReference>
<dbReference type="PROSITE" id="PS51354">
    <property type="entry name" value="GLUTAREDOXIN_2"/>
    <property type="match status" value="1"/>
</dbReference>
<dbReference type="PROSITE" id="PS00573">
    <property type="entry name" value="PYRIDINE_REDOX_2"/>
    <property type="match status" value="1"/>
</dbReference>
<organism>
    <name type="scientific">Staphylococcus aureus (strain MW2)</name>
    <dbReference type="NCBI Taxonomy" id="196620"/>
    <lineage>
        <taxon>Bacteria</taxon>
        <taxon>Bacillati</taxon>
        <taxon>Bacillota</taxon>
        <taxon>Bacilli</taxon>
        <taxon>Bacillales</taxon>
        <taxon>Staphylococcaceae</taxon>
        <taxon>Staphylococcus</taxon>
    </lineage>
</organism>
<accession>P66013</accession>
<accession>Q99WJ7</accession>
<sequence length="507" mass="54708">MLNADLKQQLKQLLELMEGNVEFVASLGSDEKSKELKELLTEISDMSPRLSLSEKSLKRTPSFSVNRPGEETGVTFAGIPLGHEFNSLVLAILQVSGRAPKEKQSIIDQIKNLEGSFHFETFISLTCQKCPDVVQALNLMSVINPNITHSMIDGAVFREESENIMAVPAVFLNGEEFGNGRMTIQDILSKLGSTADASEFENKEPYDVLIVGGGPASGSAAIYTARKGLRTGIVADRIGGQVNDTAGIENFITVKETTGSEFSSNLAAHIDQYDIDAMTGIRATDIEKTDEAIKVTLENGAVLESKTVIIATGAGWRKLNIPGEEQLINKGVAFCPHCDGPLFENKDVAVIGGGNSGVEAAIDLAGIVNHVTLFEFASELKADNVLQDRLRSLSNVDIKTNAKTTEVVGEDHVTGIRYEDMSTGEEHLLNLDGIFVQIGLLPNTSWLKDAVELNERGEIVIDRNNNTNVPGIFAAGDVTDQKNKQIIISMGAGANAALNAFDYIIRN</sequence>
<feature type="chain" id="PRO_0000166783" description="Alkyl hydroperoxide reductase subunit F">
    <location>
        <begin position="1"/>
        <end position="507"/>
    </location>
</feature>
<feature type="binding site" evidence="1">
    <location>
        <begin position="207"/>
        <end position="222"/>
    </location>
    <ligand>
        <name>FAD</name>
        <dbReference type="ChEBI" id="CHEBI:57692"/>
    </ligand>
</feature>
<feature type="binding site" evidence="1">
    <location>
        <begin position="347"/>
        <end position="361"/>
    </location>
    <ligand>
        <name>NAD(+)</name>
        <dbReference type="ChEBI" id="CHEBI:57540"/>
    </ligand>
</feature>
<feature type="binding site" evidence="1">
    <location>
        <begin position="467"/>
        <end position="477"/>
    </location>
    <ligand>
        <name>FAD</name>
        <dbReference type="ChEBI" id="CHEBI:57692"/>
    </ligand>
</feature>
<feature type="disulfide bond" description="Redox-active" evidence="1">
    <location>
        <begin position="335"/>
        <end position="338"/>
    </location>
</feature>
<gene>
    <name type="primary">ahpF</name>
    <name type="ordered locus">MW0356</name>
</gene>
<keyword id="KW-1015">Disulfide bond</keyword>
<keyword id="KW-0274">FAD</keyword>
<keyword id="KW-0285">Flavoprotein</keyword>
<keyword id="KW-0520">NAD</keyword>
<keyword id="KW-0521">NADP</keyword>
<keyword id="KW-0560">Oxidoreductase</keyword>
<keyword id="KW-0676">Redox-active center</keyword>
<comment type="function">
    <text evidence="1">Serves to protect the cell against DNA damage by alkyl hydroperoxides. It can use either NADH or NADPH as electron donor for direct reduction of redox dyes or of alkyl hydroperoxides when combined with the AhpC protein (By similarity).</text>
</comment>
<comment type="cofactor">
    <cofactor evidence="1">
        <name>FAD</name>
        <dbReference type="ChEBI" id="CHEBI:57692"/>
    </cofactor>
    <text evidence="1">Binds 1 FAD per subunit.</text>
</comment>
<comment type="subunit">
    <text evidence="1">Homodimer.</text>
</comment>
<comment type="miscellaneous">
    <text>The active site is a redox-active disulfide bond.</text>
</comment>
<comment type="similarity">
    <text evidence="2">Belongs to the class-II pyridine nucleotide-disulfide oxidoreductase family.</text>
</comment>